<name>HTPX_STRTD</name>
<protein>
    <recommendedName>
        <fullName evidence="1">Protease HtpX homolog</fullName>
        <ecNumber evidence="1">3.4.24.-</ecNumber>
    </recommendedName>
</protein>
<evidence type="ECO:0000255" key="1">
    <source>
        <dbReference type="HAMAP-Rule" id="MF_00188"/>
    </source>
</evidence>
<reference key="1">
    <citation type="journal article" date="2006" name="Proc. Natl. Acad. Sci. U.S.A.">
        <title>Comparative genomics of the lactic acid bacteria.</title>
        <authorList>
            <person name="Makarova K.S."/>
            <person name="Slesarev A."/>
            <person name="Wolf Y.I."/>
            <person name="Sorokin A."/>
            <person name="Mirkin B."/>
            <person name="Koonin E.V."/>
            <person name="Pavlov A."/>
            <person name="Pavlova N."/>
            <person name="Karamychev V."/>
            <person name="Polouchine N."/>
            <person name="Shakhova V."/>
            <person name="Grigoriev I."/>
            <person name="Lou Y."/>
            <person name="Rohksar D."/>
            <person name="Lucas S."/>
            <person name="Huang K."/>
            <person name="Goodstein D.M."/>
            <person name="Hawkins T."/>
            <person name="Plengvidhya V."/>
            <person name="Welker D."/>
            <person name="Hughes J."/>
            <person name="Goh Y."/>
            <person name="Benson A."/>
            <person name="Baldwin K."/>
            <person name="Lee J.-H."/>
            <person name="Diaz-Muniz I."/>
            <person name="Dosti B."/>
            <person name="Smeianov V."/>
            <person name="Wechter W."/>
            <person name="Barabote R."/>
            <person name="Lorca G."/>
            <person name="Altermann E."/>
            <person name="Barrangou R."/>
            <person name="Ganesan B."/>
            <person name="Xie Y."/>
            <person name="Rawsthorne H."/>
            <person name="Tamir D."/>
            <person name="Parker C."/>
            <person name="Breidt F."/>
            <person name="Broadbent J.R."/>
            <person name="Hutkins R."/>
            <person name="O'Sullivan D."/>
            <person name="Steele J."/>
            <person name="Unlu G."/>
            <person name="Saier M.H. Jr."/>
            <person name="Klaenhammer T."/>
            <person name="Richardson P."/>
            <person name="Kozyavkin S."/>
            <person name="Weimer B.C."/>
            <person name="Mills D.A."/>
        </authorList>
    </citation>
    <scope>NUCLEOTIDE SEQUENCE [LARGE SCALE GENOMIC DNA]</scope>
    <source>
        <strain>ATCC BAA-491 / LMD-9</strain>
    </source>
</reference>
<sequence length="299" mass="32816">MLFDQIARNKRKTWLLLLVFFLLLGLVGYGVGYLWLGSGFGGLILALVIGFIYAVTMIFQSTNVVMAMNGAREVDEQTAPNLYHVVEDMAMVAQIPMPRVFIVDDPSMNAFATGSSPKNAAVAATTGLLAVMNREELEGVIGHEVSHIRNYDIRISTIAVALASAITMLAVMARNMMFWGGGRRRNDDDRNGSSGLEIILLIISLIAIILAPLAATLVQLAISRQREFLADASSVELTRNPQGMINALLKLDNSAPMQHHVDDASAALFINDPKKESGLQKFFYTHPPISERVERLKQM</sequence>
<keyword id="KW-1003">Cell membrane</keyword>
<keyword id="KW-0378">Hydrolase</keyword>
<keyword id="KW-0472">Membrane</keyword>
<keyword id="KW-0479">Metal-binding</keyword>
<keyword id="KW-0482">Metalloprotease</keyword>
<keyword id="KW-0645">Protease</keyword>
<keyword id="KW-0812">Transmembrane</keyword>
<keyword id="KW-1133">Transmembrane helix</keyword>
<keyword id="KW-0862">Zinc</keyword>
<proteinExistence type="inferred from homology"/>
<dbReference type="EC" id="3.4.24.-" evidence="1"/>
<dbReference type="EMBL" id="CP000419">
    <property type="protein sequence ID" value="ABJ66010.1"/>
    <property type="molecule type" value="Genomic_DNA"/>
</dbReference>
<dbReference type="RefSeq" id="WP_011680992.1">
    <property type="nucleotide sequence ID" value="NC_008532.1"/>
</dbReference>
<dbReference type="KEGG" id="ste:STER_0757"/>
<dbReference type="HOGENOM" id="CLU_042266_2_1_9"/>
<dbReference type="GO" id="GO:0005886">
    <property type="term" value="C:plasma membrane"/>
    <property type="evidence" value="ECO:0007669"/>
    <property type="project" value="UniProtKB-SubCell"/>
</dbReference>
<dbReference type="GO" id="GO:0004222">
    <property type="term" value="F:metalloendopeptidase activity"/>
    <property type="evidence" value="ECO:0007669"/>
    <property type="project" value="UniProtKB-UniRule"/>
</dbReference>
<dbReference type="GO" id="GO:0008270">
    <property type="term" value="F:zinc ion binding"/>
    <property type="evidence" value="ECO:0007669"/>
    <property type="project" value="UniProtKB-UniRule"/>
</dbReference>
<dbReference type="GO" id="GO:0006508">
    <property type="term" value="P:proteolysis"/>
    <property type="evidence" value="ECO:0007669"/>
    <property type="project" value="UniProtKB-KW"/>
</dbReference>
<dbReference type="CDD" id="cd07340">
    <property type="entry name" value="M48B_Htpx_like"/>
    <property type="match status" value="1"/>
</dbReference>
<dbReference type="Gene3D" id="3.30.2010.10">
    <property type="entry name" value="Metalloproteases ('zincins'), catalytic domain"/>
    <property type="match status" value="1"/>
</dbReference>
<dbReference type="HAMAP" id="MF_00188">
    <property type="entry name" value="Pept_M48_protease_HtpX"/>
    <property type="match status" value="1"/>
</dbReference>
<dbReference type="InterPro" id="IPR050083">
    <property type="entry name" value="HtpX_protease"/>
</dbReference>
<dbReference type="InterPro" id="IPR022919">
    <property type="entry name" value="Pept_M48_protease_HtpX"/>
</dbReference>
<dbReference type="InterPro" id="IPR001915">
    <property type="entry name" value="Peptidase_M48"/>
</dbReference>
<dbReference type="NCBIfam" id="NF003425">
    <property type="entry name" value="PRK04897.1"/>
    <property type="match status" value="1"/>
</dbReference>
<dbReference type="PANTHER" id="PTHR43221">
    <property type="entry name" value="PROTEASE HTPX"/>
    <property type="match status" value="1"/>
</dbReference>
<dbReference type="PANTHER" id="PTHR43221:SF1">
    <property type="entry name" value="PROTEASE HTPX"/>
    <property type="match status" value="1"/>
</dbReference>
<dbReference type="Pfam" id="PF01435">
    <property type="entry name" value="Peptidase_M48"/>
    <property type="match status" value="1"/>
</dbReference>
<organism>
    <name type="scientific">Streptococcus thermophilus (strain ATCC BAA-491 / LMD-9)</name>
    <dbReference type="NCBI Taxonomy" id="322159"/>
    <lineage>
        <taxon>Bacteria</taxon>
        <taxon>Bacillati</taxon>
        <taxon>Bacillota</taxon>
        <taxon>Bacilli</taxon>
        <taxon>Lactobacillales</taxon>
        <taxon>Streptococcaceae</taxon>
        <taxon>Streptococcus</taxon>
    </lineage>
</organism>
<comment type="cofactor">
    <cofactor evidence="1">
        <name>Zn(2+)</name>
        <dbReference type="ChEBI" id="CHEBI:29105"/>
    </cofactor>
    <text evidence="1">Binds 1 zinc ion per subunit.</text>
</comment>
<comment type="subcellular location">
    <subcellularLocation>
        <location evidence="1">Cell membrane</location>
        <topology evidence="1">Multi-pass membrane protein</topology>
    </subcellularLocation>
</comment>
<comment type="similarity">
    <text evidence="1">Belongs to the peptidase M48B family.</text>
</comment>
<accession>Q03LB2</accession>
<feature type="chain" id="PRO_1000020959" description="Protease HtpX homolog">
    <location>
        <begin position="1"/>
        <end position="299"/>
    </location>
</feature>
<feature type="transmembrane region" description="Helical" evidence="1">
    <location>
        <begin position="14"/>
        <end position="34"/>
    </location>
</feature>
<feature type="transmembrane region" description="Helical" evidence="1">
    <location>
        <begin position="39"/>
        <end position="59"/>
    </location>
</feature>
<feature type="transmembrane region" description="Helical" evidence="1">
    <location>
        <begin position="153"/>
        <end position="173"/>
    </location>
</feature>
<feature type="transmembrane region" description="Helical" evidence="1">
    <location>
        <begin position="198"/>
        <end position="218"/>
    </location>
</feature>
<feature type="active site" evidence="1">
    <location>
        <position position="144"/>
    </location>
</feature>
<feature type="binding site" evidence="1">
    <location>
        <position position="143"/>
    </location>
    <ligand>
        <name>Zn(2+)</name>
        <dbReference type="ChEBI" id="CHEBI:29105"/>
        <note>catalytic</note>
    </ligand>
</feature>
<feature type="binding site" evidence="1">
    <location>
        <position position="147"/>
    </location>
    <ligand>
        <name>Zn(2+)</name>
        <dbReference type="ChEBI" id="CHEBI:29105"/>
        <note>catalytic</note>
    </ligand>
</feature>
<feature type="binding site" evidence="1">
    <location>
        <position position="227"/>
    </location>
    <ligand>
        <name>Zn(2+)</name>
        <dbReference type="ChEBI" id="CHEBI:29105"/>
        <note>catalytic</note>
    </ligand>
</feature>
<gene>
    <name evidence="1" type="primary">htpX</name>
    <name type="ordered locus">STER_0757</name>
</gene>